<protein>
    <recommendedName>
        <fullName>BTB/POZ domain-containing protein 7</fullName>
    </recommendedName>
</protein>
<sequence length="1132" mass="126368">MGANASNYPHSCSPRVGGNSQAQQTFIGTSSYSQQGYGCESKLYSLDHGHEKPQDKKKRTSGLATLKKKFIKRRKSNRSADHAKQMRELLSGWDVRDVNALVEEYEGTSALKELSLQASLARPEARTLQKDMADLYEYKYCTDVDLIFQETCFPVHRAILAARCPFFKTLLSSSPEYGAEIIMDINTAGIDMPMFSALLHYLYTGEFGMEDSRFQNVDILVQLSEEFGTPNSLDVDMRGLFDYMCYYDVVLSFSSDSELVEAFGGNQNCLDEELKAHKAVISARSPFFRNLLQRRIRTGEEITDRTLRTPTRIILDESIIPKKYATVILHCMYTDVVDLSVLHCSPSVGSLSEVQALVAGKPNMTRAEEAMELYHIALFLEFNMLAQGCEDIIAESISLDTLIAILKWSSHPYGSKWVHRQALHFLCEEFSQVMTSDVFYELSKDHLLTAIQSDYLQASEQDILKYLIKWGEHQLMKRIADREPNLLSGTAHSVNKRGVKRRDLDMEELREILSSLLPFVRIEHILPINSEVLSDAMKRGLISTPPSDMLPTTEGGKSNAWLRQKNAGIYVRPRLFSPYVEEAKSVLDEMMVEQTDLVRLRMVRMSNVPDTLYMVNNAVPQCCHMISHQQISSNQSSPPSVVANEIPVPRLLIMKDMVRRLQELRHTEQVQRAYALNCGEGATVSYEIQIRVLREFGLADAAAELLQNPHKFFPDERFGDESPLLTMRQPGRCRVNSTPPAETMFTDLDSFVAFHPPLPPPPPPYHPPATPIHNQLKAGWKQRPPSQHPSRSFSYPCNHSLFHSRTAPKAGPPPVYLPSVKAAPPDCTSTAGLGRQTVAAAAATTTSTATAAAAAASEKQVRTQPVLNDLMPDIAVGVSTLSLKDRRLPELAVDTELSQSVSEAGPGPPQHLSCIPQRHTHTSRKKHTLEQKTDTRENPQEYPDFYDFSNAACRPSTPALSRRTPSPSQGGYFGPDLYSHNKASPSGLKSAYLPGQTSPKKQEEARREYPLSPDGHLHRQKNEPIHLDVVEQPPQRSDFPLAAPENASTGPAHVRGRTAVETDLTFGLTPNRPSLSACSSEAPEERSGRRLADSESLGHGAQRNTDLEREDSISRGRRSPSKPDFLYKKSAL</sequence>
<organism>
    <name type="scientific">Homo sapiens</name>
    <name type="common">Human</name>
    <dbReference type="NCBI Taxonomy" id="9606"/>
    <lineage>
        <taxon>Eukaryota</taxon>
        <taxon>Metazoa</taxon>
        <taxon>Chordata</taxon>
        <taxon>Craniata</taxon>
        <taxon>Vertebrata</taxon>
        <taxon>Euteleostomi</taxon>
        <taxon>Mammalia</taxon>
        <taxon>Eutheria</taxon>
        <taxon>Euarchontoglires</taxon>
        <taxon>Primates</taxon>
        <taxon>Haplorrhini</taxon>
        <taxon>Catarrhini</taxon>
        <taxon>Hominidae</taxon>
        <taxon>Homo</taxon>
    </lineage>
</organism>
<feature type="initiator methionine" description="Removed">
    <location>
        <position position="1"/>
    </location>
</feature>
<feature type="chain" id="PRO_0000186215" description="BTB/POZ domain-containing protein 7">
    <location>
        <begin position="2"/>
        <end position="1132"/>
    </location>
</feature>
<feature type="domain" description="BTB 1" evidence="2">
    <location>
        <begin position="142"/>
        <end position="211"/>
    </location>
</feature>
<feature type="domain" description="BTB 2" evidence="2">
    <location>
        <begin position="247"/>
        <end position="341"/>
    </location>
</feature>
<feature type="domain" description="BACK">
    <location>
        <begin position="413"/>
        <end position="479"/>
    </location>
</feature>
<feature type="region of interest" description="Disordered" evidence="3">
    <location>
        <begin position="1"/>
        <end position="24"/>
    </location>
</feature>
<feature type="region of interest" description="Disordered" evidence="3">
    <location>
        <begin position="897"/>
        <end position="1019"/>
    </location>
</feature>
<feature type="region of interest" description="Disordered" evidence="3">
    <location>
        <begin position="1035"/>
        <end position="1132"/>
    </location>
</feature>
<feature type="compositionally biased region" description="Polar residues" evidence="3">
    <location>
        <begin position="1"/>
        <end position="10"/>
    </location>
</feature>
<feature type="compositionally biased region" description="Basic residues" evidence="3">
    <location>
        <begin position="918"/>
        <end position="927"/>
    </location>
</feature>
<feature type="compositionally biased region" description="Basic and acidic residues" evidence="3">
    <location>
        <begin position="928"/>
        <end position="939"/>
    </location>
</feature>
<feature type="compositionally biased region" description="Basic and acidic residues" evidence="3">
    <location>
        <begin position="1000"/>
        <end position="1019"/>
    </location>
</feature>
<feature type="compositionally biased region" description="Basic and acidic residues" evidence="3">
    <location>
        <begin position="1083"/>
        <end position="1093"/>
    </location>
</feature>
<feature type="compositionally biased region" description="Basic and acidic residues" evidence="3">
    <location>
        <begin position="1105"/>
        <end position="1114"/>
    </location>
</feature>
<feature type="modified residue" description="Phosphoserine" evidence="9">
    <location>
        <position position="722"/>
    </location>
</feature>
<feature type="modified residue" description="Phosphoserine" evidence="9">
    <location>
        <position position="1012"/>
    </location>
</feature>
<feature type="lipid moiety-binding region" description="N-myristoyl glycine" evidence="4">
    <location>
        <position position="2"/>
    </location>
</feature>
<feature type="splice variant" id="VSP_041481" description="In isoform 5." evidence="5 7">
    <location>
        <begin position="1"/>
        <end position="351"/>
    </location>
</feature>
<feature type="splice variant" id="VSP_041482" description="In isoform 5." evidence="5 7">
    <original>SEVQALVAGKPNMTRAEEAMELYHIALFLEFNMLAQ</original>
    <variation>MAGGAGAGADGGAGGGGGGGDGSGPSGSSSGGRSLR</variation>
    <location>
        <begin position="352"/>
        <end position="387"/>
    </location>
</feature>
<feature type="splice variant" id="VSP_041483" description="In isoform 3." evidence="5 6">
    <original>GCEDIIAESISLDTLIAILKWSS</original>
    <variation>EETTVIRPACAAELSNSCLLPQS</variation>
    <location>
        <begin position="388"/>
        <end position="410"/>
    </location>
</feature>
<feature type="splice variant" id="VSP_041487" description="In isoform 3." evidence="5 6">
    <location>
        <begin position="411"/>
        <end position="1132"/>
    </location>
</feature>
<feature type="sequence conflict" description="In Ref. 2; BAB13946." evidence="8" ref="2">
    <original>I</original>
    <variation>V</variation>
    <location>
        <position position="313"/>
    </location>
</feature>
<feature type="sequence conflict" description="In Ref. 2; BAB13946." evidence="8" ref="2">
    <original>W</original>
    <variation>R</variation>
    <location>
        <position position="408"/>
    </location>
</feature>
<evidence type="ECO:0000250" key="1"/>
<evidence type="ECO:0000255" key="2">
    <source>
        <dbReference type="PROSITE-ProRule" id="PRU00037"/>
    </source>
</evidence>
<evidence type="ECO:0000256" key="3">
    <source>
        <dbReference type="SAM" id="MobiDB-lite"/>
    </source>
</evidence>
<evidence type="ECO:0000269" key="4">
    <source>
    </source>
</evidence>
<evidence type="ECO:0000303" key="5">
    <source>
    </source>
</evidence>
<evidence type="ECO:0000303" key="6">
    <source>
    </source>
</evidence>
<evidence type="ECO:0000303" key="7">
    <source ref="6"/>
</evidence>
<evidence type="ECO:0000305" key="8"/>
<evidence type="ECO:0007744" key="9">
    <source>
    </source>
</evidence>
<name>BTBD7_HUMAN</name>
<reference key="1">
    <citation type="journal article" date="2000" name="DNA Res.">
        <title>Prediction of the coding sequences of unidentified human genes. XVII. The complete sequences of 100 new cDNA clones from brain which code for large proteins in vitro.</title>
        <authorList>
            <person name="Nagase T."/>
            <person name="Kikuno R."/>
            <person name="Ishikawa K."/>
            <person name="Hirosawa M."/>
            <person name="Ohara O."/>
        </authorList>
    </citation>
    <scope>NUCLEOTIDE SEQUENCE [LARGE SCALE MRNA] (ISOFORM 1)</scope>
    <source>
        <tissue>Brain</tissue>
    </source>
</reference>
<reference key="2">
    <citation type="journal article" date="2004" name="Nat. Genet.">
        <title>Complete sequencing and characterization of 21,243 full-length human cDNAs.</title>
        <authorList>
            <person name="Ota T."/>
            <person name="Suzuki Y."/>
            <person name="Nishikawa T."/>
            <person name="Otsuki T."/>
            <person name="Sugiyama T."/>
            <person name="Irie R."/>
            <person name="Wakamatsu A."/>
            <person name="Hayashi K."/>
            <person name="Sato H."/>
            <person name="Nagai K."/>
            <person name="Kimura K."/>
            <person name="Makita H."/>
            <person name="Sekine M."/>
            <person name="Obayashi M."/>
            <person name="Nishi T."/>
            <person name="Shibahara T."/>
            <person name="Tanaka T."/>
            <person name="Ishii S."/>
            <person name="Yamamoto J."/>
            <person name="Saito K."/>
            <person name="Kawai Y."/>
            <person name="Isono Y."/>
            <person name="Nakamura Y."/>
            <person name="Nagahari K."/>
            <person name="Murakami K."/>
            <person name="Yasuda T."/>
            <person name="Iwayanagi T."/>
            <person name="Wagatsuma M."/>
            <person name="Shiratori A."/>
            <person name="Sudo H."/>
            <person name="Hosoiri T."/>
            <person name="Kaku Y."/>
            <person name="Kodaira H."/>
            <person name="Kondo H."/>
            <person name="Sugawara M."/>
            <person name="Takahashi M."/>
            <person name="Kanda K."/>
            <person name="Yokoi T."/>
            <person name="Furuya T."/>
            <person name="Kikkawa E."/>
            <person name="Omura Y."/>
            <person name="Abe K."/>
            <person name="Kamihara K."/>
            <person name="Katsuta N."/>
            <person name="Sato K."/>
            <person name="Tanikawa M."/>
            <person name="Yamazaki M."/>
            <person name="Ninomiya K."/>
            <person name="Ishibashi T."/>
            <person name="Yamashita H."/>
            <person name="Murakawa K."/>
            <person name="Fujimori K."/>
            <person name="Tanai H."/>
            <person name="Kimata M."/>
            <person name="Watanabe M."/>
            <person name="Hiraoka S."/>
            <person name="Chiba Y."/>
            <person name="Ishida S."/>
            <person name="Ono Y."/>
            <person name="Takiguchi S."/>
            <person name="Watanabe S."/>
            <person name="Yosida M."/>
            <person name="Hotuta T."/>
            <person name="Kusano J."/>
            <person name="Kanehori K."/>
            <person name="Takahashi-Fujii A."/>
            <person name="Hara H."/>
            <person name="Tanase T.-O."/>
            <person name="Nomura Y."/>
            <person name="Togiya S."/>
            <person name="Komai F."/>
            <person name="Hara R."/>
            <person name="Takeuchi K."/>
            <person name="Arita M."/>
            <person name="Imose N."/>
            <person name="Musashino K."/>
            <person name="Yuuki H."/>
            <person name="Oshima A."/>
            <person name="Sasaki N."/>
            <person name="Aotsuka S."/>
            <person name="Yoshikawa Y."/>
            <person name="Matsunawa H."/>
            <person name="Ichihara T."/>
            <person name="Shiohata N."/>
            <person name="Sano S."/>
            <person name="Moriya S."/>
            <person name="Momiyama H."/>
            <person name="Satoh N."/>
            <person name="Takami S."/>
            <person name="Terashima Y."/>
            <person name="Suzuki O."/>
            <person name="Nakagawa S."/>
            <person name="Senoh A."/>
            <person name="Mizoguchi H."/>
            <person name="Goto Y."/>
            <person name="Shimizu F."/>
            <person name="Wakebe H."/>
            <person name="Hishigaki H."/>
            <person name="Watanabe T."/>
            <person name="Sugiyama A."/>
            <person name="Takemoto M."/>
            <person name="Kawakami B."/>
            <person name="Yamazaki M."/>
            <person name="Watanabe K."/>
            <person name="Kumagai A."/>
            <person name="Itakura S."/>
            <person name="Fukuzumi Y."/>
            <person name="Fujimori Y."/>
            <person name="Komiyama M."/>
            <person name="Tashiro H."/>
            <person name="Tanigami A."/>
            <person name="Fujiwara T."/>
            <person name="Ono T."/>
            <person name="Yamada K."/>
            <person name="Fujii Y."/>
            <person name="Ozaki K."/>
            <person name="Hirao M."/>
            <person name="Ohmori Y."/>
            <person name="Kawabata A."/>
            <person name="Hikiji T."/>
            <person name="Kobatake N."/>
            <person name="Inagaki H."/>
            <person name="Ikema Y."/>
            <person name="Okamoto S."/>
            <person name="Okitani R."/>
            <person name="Kawakami T."/>
            <person name="Noguchi S."/>
            <person name="Itoh T."/>
            <person name="Shigeta K."/>
            <person name="Senba T."/>
            <person name="Matsumura K."/>
            <person name="Nakajima Y."/>
            <person name="Mizuno T."/>
            <person name="Morinaga M."/>
            <person name="Sasaki M."/>
            <person name="Togashi T."/>
            <person name="Oyama M."/>
            <person name="Hata H."/>
            <person name="Watanabe M."/>
            <person name="Komatsu T."/>
            <person name="Mizushima-Sugano J."/>
            <person name="Satoh T."/>
            <person name="Shirai Y."/>
            <person name="Takahashi Y."/>
            <person name="Nakagawa K."/>
            <person name="Okumura K."/>
            <person name="Nagase T."/>
            <person name="Nomura N."/>
            <person name="Kikuchi H."/>
            <person name="Masuho Y."/>
            <person name="Yamashita R."/>
            <person name="Nakai K."/>
            <person name="Yada T."/>
            <person name="Nakamura Y."/>
            <person name="Ohara O."/>
            <person name="Isogai T."/>
            <person name="Sugano S."/>
        </authorList>
    </citation>
    <scope>NUCLEOTIDE SEQUENCE [LARGE SCALE MRNA] (ISOFORMS 3 AND 5)</scope>
    <scope>NUCLEOTIDE SEQUENCE [LARGE SCALE MRNA] OF 135-536 (ISOFORM 1)</scope>
    <source>
        <tissue>Brain</tissue>
    </source>
</reference>
<reference key="3">
    <citation type="journal article" date="2003" name="Nature">
        <title>The DNA sequence and analysis of human chromosome 14.</title>
        <authorList>
            <person name="Heilig R."/>
            <person name="Eckenberg R."/>
            <person name="Petit J.-L."/>
            <person name="Fonknechten N."/>
            <person name="Da Silva C."/>
            <person name="Cattolico L."/>
            <person name="Levy M."/>
            <person name="Barbe V."/>
            <person name="De Berardinis V."/>
            <person name="Ureta-Vidal A."/>
            <person name="Pelletier E."/>
            <person name="Vico V."/>
            <person name="Anthouard V."/>
            <person name="Rowen L."/>
            <person name="Madan A."/>
            <person name="Qin S."/>
            <person name="Sun H."/>
            <person name="Du H."/>
            <person name="Pepin K."/>
            <person name="Artiguenave F."/>
            <person name="Robert C."/>
            <person name="Cruaud C."/>
            <person name="Bruels T."/>
            <person name="Jaillon O."/>
            <person name="Friedlander L."/>
            <person name="Samson G."/>
            <person name="Brottier P."/>
            <person name="Cure S."/>
            <person name="Segurens B."/>
            <person name="Aniere F."/>
            <person name="Samain S."/>
            <person name="Crespeau H."/>
            <person name="Abbasi N."/>
            <person name="Aiach N."/>
            <person name="Boscus D."/>
            <person name="Dickhoff R."/>
            <person name="Dors M."/>
            <person name="Dubois I."/>
            <person name="Friedman C."/>
            <person name="Gouyvenoux M."/>
            <person name="James R."/>
            <person name="Madan A."/>
            <person name="Mairey-Estrada B."/>
            <person name="Mangenot S."/>
            <person name="Martins N."/>
            <person name="Menard M."/>
            <person name="Oztas S."/>
            <person name="Ratcliffe A."/>
            <person name="Shaffer T."/>
            <person name="Trask B."/>
            <person name="Vacherie B."/>
            <person name="Bellemere C."/>
            <person name="Belser C."/>
            <person name="Besnard-Gonnet M."/>
            <person name="Bartol-Mavel D."/>
            <person name="Boutard M."/>
            <person name="Briez-Silla S."/>
            <person name="Combette S."/>
            <person name="Dufosse-Laurent V."/>
            <person name="Ferron C."/>
            <person name="Lechaplais C."/>
            <person name="Louesse C."/>
            <person name="Muselet D."/>
            <person name="Magdelenat G."/>
            <person name="Pateau E."/>
            <person name="Petit E."/>
            <person name="Sirvain-Trukniewicz P."/>
            <person name="Trybou A."/>
            <person name="Vega-Czarny N."/>
            <person name="Bataille E."/>
            <person name="Bluet E."/>
            <person name="Bordelais I."/>
            <person name="Dubois M."/>
            <person name="Dumont C."/>
            <person name="Guerin T."/>
            <person name="Haffray S."/>
            <person name="Hammadi R."/>
            <person name="Muanga J."/>
            <person name="Pellouin V."/>
            <person name="Robert D."/>
            <person name="Wunderle E."/>
            <person name="Gauguet G."/>
            <person name="Roy A."/>
            <person name="Sainte-Marthe L."/>
            <person name="Verdier J."/>
            <person name="Verdier-Discala C."/>
            <person name="Hillier L.W."/>
            <person name="Fulton L."/>
            <person name="McPherson J."/>
            <person name="Matsuda F."/>
            <person name="Wilson R."/>
            <person name="Scarpelli C."/>
            <person name="Gyapay G."/>
            <person name="Wincker P."/>
            <person name="Saurin W."/>
            <person name="Quetier F."/>
            <person name="Waterston R."/>
            <person name="Hood L."/>
            <person name="Weissenbach J."/>
        </authorList>
    </citation>
    <scope>NUCLEOTIDE SEQUENCE [LARGE SCALE GENOMIC DNA]</scope>
</reference>
<reference key="4">
    <citation type="journal article" date="2004" name="Genome Res.">
        <title>The status, quality, and expansion of the NIH full-length cDNA project: the Mammalian Gene Collection (MGC).</title>
        <authorList>
            <consortium name="The MGC Project Team"/>
        </authorList>
    </citation>
    <scope>NUCLEOTIDE SEQUENCE [LARGE SCALE MRNA] (ISOFORM 3)</scope>
    <source>
        <tissue>Testis</tissue>
    </source>
</reference>
<reference key="5">
    <citation type="journal article" date="2007" name="BMC Genomics">
        <title>The full-ORF clone resource of the German cDNA consortium.</title>
        <authorList>
            <person name="Bechtel S."/>
            <person name="Rosenfelder H."/>
            <person name="Duda A."/>
            <person name="Schmidt C.P."/>
            <person name="Ernst U."/>
            <person name="Wellenreuther R."/>
            <person name="Mehrle A."/>
            <person name="Schuster C."/>
            <person name="Bahr A."/>
            <person name="Bloecker H."/>
            <person name="Heubner D."/>
            <person name="Hoerlein A."/>
            <person name="Michel G."/>
            <person name="Wedler H."/>
            <person name="Koehrer K."/>
            <person name="Ottenwaelder B."/>
            <person name="Poustka A."/>
            <person name="Wiemann S."/>
            <person name="Schupp I."/>
        </authorList>
    </citation>
    <scope>NUCLEOTIDE SEQUENCE [LARGE SCALE MRNA] OF 457-536 (ISOFORM 1)</scope>
    <source>
        <tissue>Amygdala</tissue>
    </source>
</reference>
<reference key="6">
    <citation type="submission" date="2003-02" db="EMBL/GenBank/DDBJ databases">
        <title>Full-length cDNA libraries and normalization.</title>
        <authorList>
            <person name="Li W.B."/>
            <person name="Gruber C."/>
            <person name="Jessee J."/>
            <person name="Polayes D."/>
        </authorList>
    </citation>
    <scope>NUCLEOTIDE SEQUENCE [LARGE SCALE MRNA] OF 1-938 (ISOFORM 5)</scope>
    <source>
        <tissue>Neuroblastoma</tissue>
    </source>
</reference>
<reference key="7">
    <citation type="journal article" date="2010" name="Proteomics">
        <title>Strategy for comprehensive identification of human N-myristoylated proteins using an insect cell-free protein synthesis system.</title>
        <authorList>
            <person name="Suzuki T."/>
            <person name="Moriya K."/>
            <person name="Nagatoshi K."/>
            <person name="Ota Y."/>
            <person name="Ezure T."/>
            <person name="Ando E."/>
            <person name="Tsunasawa S."/>
            <person name="Utsumi T."/>
        </authorList>
    </citation>
    <scope>MYRISTOYLATION AT GLY-2</scope>
</reference>
<reference key="8">
    <citation type="journal article" date="2013" name="J. Proteome Res.">
        <title>Toward a comprehensive characterization of a human cancer cell phosphoproteome.</title>
        <authorList>
            <person name="Zhou H."/>
            <person name="Di Palma S."/>
            <person name="Preisinger C."/>
            <person name="Peng M."/>
            <person name="Polat A.N."/>
            <person name="Heck A.J."/>
            <person name="Mohammed S."/>
        </authorList>
    </citation>
    <scope>PHOSPHORYLATION [LARGE SCALE ANALYSIS] AT SER-722 AND SER-1012</scope>
    <scope>IDENTIFICATION BY MASS SPECTROMETRY [LARGE SCALE ANALYSIS]</scope>
    <source>
        <tissue>Cervix carcinoma</tissue>
        <tissue>Erythroleukemia</tissue>
    </source>
</reference>
<comment type="function">
    <text evidence="1">Acts as a mediator of epithelial dynamics and organ branching by promoting cleft progression. Induced following accumulation of fibronectin in forming clefts, leading to local expression of the cell-scattering SNAIL2 and suppression of E-cadherin levels, thereby altering cell morphology and reducing cell-cell adhesion. This stimulates cell separation at the base of forming clefts by local, dynamic intercellular gap formation and promotes cleft progression (By similarity).</text>
</comment>
<comment type="subcellular location">
    <subcellularLocation>
        <location evidence="1">Nucleus</location>
    </subcellularLocation>
</comment>
<comment type="alternative products">
    <event type="alternative splicing"/>
    <isoform>
        <id>Q9P203-1</id>
        <name>1</name>
        <sequence type="displayed"/>
    </isoform>
    <isoform>
        <id>Q9P203-3</id>
        <name>3</name>
        <sequence type="described" ref="VSP_041483 VSP_041487"/>
    </isoform>
    <isoform>
        <id>Q9P203-5</id>
        <name>5</name>
        <sequence type="described" ref="VSP_041481 VSP_041482"/>
    </isoform>
</comment>
<comment type="sequence caution" evidence="8">
    <conflict type="erroneous initiation">
        <sequence resource="EMBL-CDS" id="BAA96049"/>
    </conflict>
    <text>Extended N-terminus.</text>
</comment>
<comment type="sequence caution" evidence="8">
    <conflict type="erroneous initiation">
        <sequence resource="EMBL-CDS" id="BAB13946"/>
    </conflict>
    <text>Truncated N-terminus.</text>
</comment>
<comment type="sequence caution" evidence="8">
    <conflict type="miscellaneous discrepancy">
        <sequence resource="EMBL-CDS" id="BAB13946"/>
    </conflict>
    <text>Probable cloning artifact.</text>
</comment>
<comment type="sequence caution" evidence="8">
    <conflict type="miscellaneous discrepancy">
        <sequence resource="EMBL-CDS" id="CAH10736"/>
    </conflict>
    <text>Probable cloning artifact.</text>
</comment>
<proteinExistence type="evidence at protein level"/>
<keyword id="KW-0025">Alternative splicing</keyword>
<keyword id="KW-0217">Developmental protein</keyword>
<keyword id="KW-0449">Lipoprotein</keyword>
<keyword id="KW-0519">Myristate</keyword>
<keyword id="KW-0539">Nucleus</keyword>
<keyword id="KW-0597">Phosphoprotein</keyword>
<keyword id="KW-1267">Proteomics identification</keyword>
<keyword id="KW-1185">Reference proteome</keyword>
<keyword id="KW-0677">Repeat</keyword>
<accession>Q9P203</accession>
<accession>A8K5V7</accession>
<accession>Q69Z05</accession>
<accession>Q7Z308</accession>
<accession>Q86TS0</accession>
<accession>Q9HAA4</accession>
<accession>Q9NVM0</accession>
<gene>
    <name type="primary">BTBD7</name>
    <name type="synonym">KIAA1525</name>
</gene>
<dbReference type="EMBL" id="AB040958">
    <property type="protein sequence ID" value="BAA96049.2"/>
    <property type="status" value="ALT_INIT"/>
    <property type="molecule type" value="mRNA"/>
</dbReference>
<dbReference type="EMBL" id="AK001510">
    <property type="protein sequence ID" value="BAA91730.1"/>
    <property type="molecule type" value="mRNA"/>
</dbReference>
<dbReference type="EMBL" id="AK021953">
    <property type="protein sequence ID" value="BAB13946.1"/>
    <property type="status" value="ALT_SEQ"/>
    <property type="molecule type" value="mRNA"/>
</dbReference>
<dbReference type="EMBL" id="AK291422">
    <property type="protein sequence ID" value="BAF84111.1"/>
    <property type="molecule type" value="mRNA"/>
</dbReference>
<dbReference type="EMBL" id="AL122023">
    <property type="status" value="NOT_ANNOTATED_CDS"/>
    <property type="molecule type" value="Genomic_DNA"/>
</dbReference>
<dbReference type="EMBL" id="AL132838">
    <property type="status" value="NOT_ANNOTATED_CDS"/>
    <property type="molecule type" value="Genomic_DNA"/>
</dbReference>
<dbReference type="EMBL" id="BC047071">
    <property type="protein sequence ID" value="AAH47071.1"/>
    <property type="molecule type" value="mRNA"/>
</dbReference>
<dbReference type="EMBL" id="AL049394">
    <property type="protein sequence ID" value="CAH10736.1"/>
    <property type="status" value="ALT_SEQ"/>
    <property type="molecule type" value="mRNA"/>
</dbReference>
<dbReference type="EMBL" id="BX248762">
    <property type="protein sequence ID" value="CAD66569.1"/>
    <property type="molecule type" value="mRNA"/>
</dbReference>
<dbReference type="CCDS" id="CCDS32146.1">
    <molecule id="Q9P203-1"/>
</dbReference>
<dbReference type="CCDS" id="CCDS32147.1">
    <molecule id="Q9P203-3"/>
</dbReference>
<dbReference type="CCDS" id="CCDS73684.1">
    <molecule id="Q9P203-5"/>
</dbReference>
<dbReference type="PIR" id="JC7757">
    <property type="entry name" value="JC7757"/>
</dbReference>
<dbReference type="RefSeq" id="NP_001002860.2">
    <molecule id="Q9P203-1"/>
    <property type="nucleotide sequence ID" value="NM_001002860.4"/>
</dbReference>
<dbReference type="RefSeq" id="NP_001276062.1">
    <molecule id="Q9P203-5"/>
    <property type="nucleotide sequence ID" value="NM_001289133.2"/>
</dbReference>
<dbReference type="RefSeq" id="NP_060637.1">
    <molecule id="Q9P203-3"/>
    <property type="nucleotide sequence ID" value="NM_018167.5"/>
</dbReference>
<dbReference type="RefSeq" id="XP_011535241.1">
    <molecule id="Q9P203-1"/>
    <property type="nucleotide sequence ID" value="XM_011536939.3"/>
</dbReference>
<dbReference type="RefSeq" id="XP_047287521.1">
    <molecule id="Q9P203-1"/>
    <property type="nucleotide sequence ID" value="XM_047431565.1"/>
</dbReference>
<dbReference type="RefSeq" id="XP_047287522.1">
    <molecule id="Q9P203-1"/>
    <property type="nucleotide sequence ID" value="XM_047431566.1"/>
</dbReference>
<dbReference type="RefSeq" id="XP_047287523.1">
    <molecule id="Q9P203-3"/>
    <property type="nucleotide sequence ID" value="XM_047431567.1"/>
</dbReference>
<dbReference type="RefSeq" id="XP_054184963.1">
    <molecule id="Q9P203-1"/>
    <property type="nucleotide sequence ID" value="XM_054328988.1"/>
</dbReference>
<dbReference type="RefSeq" id="XP_054184964.1">
    <molecule id="Q9P203-1"/>
    <property type="nucleotide sequence ID" value="XM_054328989.1"/>
</dbReference>
<dbReference type="RefSeq" id="XP_054184965.1">
    <molecule id="Q9P203-1"/>
    <property type="nucleotide sequence ID" value="XM_054328990.1"/>
</dbReference>
<dbReference type="RefSeq" id="XP_054184967.1">
    <molecule id="Q9P203-3"/>
    <property type="nucleotide sequence ID" value="XM_054328992.1"/>
</dbReference>
<dbReference type="RefSeq" id="XP_054232332.1">
    <molecule id="Q9P203-3"/>
    <property type="nucleotide sequence ID" value="XM_054376357.1"/>
</dbReference>
<dbReference type="BioGRID" id="120847">
    <property type="interactions" value="13"/>
</dbReference>
<dbReference type="ELM" id="Q9P203"/>
<dbReference type="FunCoup" id="Q9P203">
    <property type="interactions" value="2712"/>
</dbReference>
<dbReference type="IntAct" id="Q9P203">
    <property type="interactions" value="4"/>
</dbReference>
<dbReference type="STRING" id="9606.ENSP00000335615"/>
<dbReference type="iPTMnet" id="Q9P203"/>
<dbReference type="PhosphoSitePlus" id="Q9P203"/>
<dbReference type="BioMuta" id="BTBD7"/>
<dbReference type="DMDM" id="67460591"/>
<dbReference type="jPOST" id="Q9P203"/>
<dbReference type="MassIVE" id="Q9P203"/>
<dbReference type="PaxDb" id="9606-ENSP00000335615"/>
<dbReference type="PeptideAtlas" id="Q9P203"/>
<dbReference type="ProteomicsDB" id="83696">
    <molecule id="Q9P203-1"/>
</dbReference>
<dbReference type="ProteomicsDB" id="83697">
    <molecule id="Q9P203-3"/>
</dbReference>
<dbReference type="ProteomicsDB" id="83698">
    <molecule id="Q9P203-5"/>
</dbReference>
<dbReference type="Antibodypedia" id="55719">
    <property type="antibodies" value="116 antibodies from 25 providers"/>
</dbReference>
<dbReference type="DNASU" id="55727"/>
<dbReference type="Ensembl" id="ENST00000298896.7">
    <molecule id="Q9P203-3"/>
    <property type="protein sequence ID" value="ENSP00000298896.3"/>
    <property type="gene ID" value="ENSG00000011114.15"/>
</dbReference>
<dbReference type="Ensembl" id="ENST00000334746.10">
    <molecule id="Q9P203-1"/>
    <property type="protein sequence ID" value="ENSP00000335615.5"/>
    <property type="gene ID" value="ENSG00000011114.15"/>
</dbReference>
<dbReference type="Ensembl" id="ENST00000554565.5">
    <molecule id="Q9P203-5"/>
    <property type="protein sequence ID" value="ENSP00000451010.1"/>
    <property type="gene ID" value="ENSG00000011114.15"/>
</dbReference>
<dbReference type="Ensembl" id="ENST00000613511.3">
    <molecule id="Q9P203-3"/>
    <property type="protein sequence ID" value="ENSP00000481899.1"/>
    <property type="gene ID" value="ENSG00000277222.4"/>
</dbReference>
<dbReference type="Ensembl" id="ENST00000613725.4">
    <molecule id="Q9P203-1"/>
    <property type="protein sequence ID" value="ENSP00000479193.1"/>
    <property type="gene ID" value="ENSG00000277222.4"/>
</dbReference>
<dbReference type="Ensembl" id="ENST00000627779.2">
    <molecule id="Q9P203-5"/>
    <property type="protein sequence ID" value="ENSP00000486274.1"/>
    <property type="gene ID" value="ENSG00000277222.4"/>
</dbReference>
<dbReference type="GeneID" id="55727"/>
<dbReference type="KEGG" id="hsa:55727"/>
<dbReference type="MANE-Select" id="ENST00000334746.10">
    <property type="protein sequence ID" value="ENSP00000335615.5"/>
    <property type="RefSeq nucleotide sequence ID" value="NM_001002860.4"/>
    <property type="RefSeq protein sequence ID" value="NP_001002860.2"/>
</dbReference>
<dbReference type="UCSC" id="uc001ybo.5">
    <molecule id="Q9P203-1"/>
    <property type="organism name" value="human"/>
</dbReference>
<dbReference type="AGR" id="HGNC:18269"/>
<dbReference type="CTD" id="55727"/>
<dbReference type="DisGeNET" id="55727"/>
<dbReference type="GeneCards" id="BTBD7"/>
<dbReference type="HGNC" id="HGNC:18269">
    <property type="gene designation" value="BTBD7"/>
</dbReference>
<dbReference type="HPA" id="ENSG00000011114">
    <property type="expression patterns" value="Low tissue specificity"/>
</dbReference>
<dbReference type="MIM" id="610386">
    <property type="type" value="gene"/>
</dbReference>
<dbReference type="neXtProt" id="NX_Q9P203"/>
<dbReference type="OpenTargets" id="ENSG00000011114"/>
<dbReference type="PharmGKB" id="PA134938971"/>
<dbReference type="VEuPathDB" id="HostDB:ENSG00000011114"/>
<dbReference type="eggNOG" id="KOG2838">
    <property type="taxonomic scope" value="Eukaryota"/>
</dbReference>
<dbReference type="GeneTree" id="ENSGT00390000014092"/>
<dbReference type="HOGENOM" id="CLU_007289_0_0_1"/>
<dbReference type="InParanoid" id="Q9P203"/>
<dbReference type="OMA" id="ILMKFHR"/>
<dbReference type="OrthoDB" id="2347980at2759"/>
<dbReference type="PAN-GO" id="Q9P203">
    <property type="GO annotations" value="1 GO annotation based on evolutionary models"/>
</dbReference>
<dbReference type="PhylomeDB" id="Q9P203"/>
<dbReference type="TreeFam" id="TF316112"/>
<dbReference type="PathwayCommons" id="Q9P203"/>
<dbReference type="SignaLink" id="Q9P203"/>
<dbReference type="BioGRID-ORCS" id="55727">
    <property type="hits" value="88 hits in 1191 CRISPR screens"/>
</dbReference>
<dbReference type="ChiTaRS" id="BTBD7">
    <property type="organism name" value="human"/>
</dbReference>
<dbReference type="GenomeRNAi" id="55727"/>
<dbReference type="Pharos" id="Q9P203">
    <property type="development level" value="Tbio"/>
</dbReference>
<dbReference type="PRO" id="PR:Q9P203"/>
<dbReference type="Proteomes" id="UP000005640">
    <property type="component" value="Chromosome 14"/>
</dbReference>
<dbReference type="RNAct" id="Q9P203">
    <property type="molecule type" value="protein"/>
</dbReference>
<dbReference type="Bgee" id="ENSG00000011114">
    <property type="expression patterns" value="Expressed in primordial germ cell in gonad and 109 other cell types or tissues"/>
</dbReference>
<dbReference type="ExpressionAtlas" id="Q9P203">
    <property type="expression patterns" value="baseline and differential"/>
</dbReference>
<dbReference type="GO" id="GO:0005634">
    <property type="term" value="C:nucleus"/>
    <property type="evidence" value="ECO:0000250"/>
    <property type="project" value="UniProtKB"/>
</dbReference>
<dbReference type="GO" id="GO:0061138">
    <property type="term" value="P:morphogenesis of a branching epithelium"/>
    <property type="evidence" value="ECO:0007669"/>
    <property type="project" value="InterPro"/>
</dbReference>
<dbReference type="GO" id="GO:0060693">
    <property type="term" value="P:regulation of branching involved in salivary gland morphogenesis"/>
    <property type="evidence" value="ECO:0000318"/>
    <property type="project" value="GO_Central"/>
</dbReference>
<dbReference type="CDD" id="cd18489">
    <property type="entry name" value="BACK_BTBD7"/>
    <property type="match status" value="1"/>
</dbReference>
<dbReference type="CDD" id="cd18283">
    <property type="entry name" value="BTB1_POZ_BTBD7"/>
    <property type="match status" value="1"/>
</dbReference>
<dbReference type="CDD" id="cd18284">
    <property type="entry name" value="BTB2_POZ_BTBD7"/>
    <property type="match status" value="1"/>
</dbReference>
<dbReference type="FunFam" id="3.30.710.10:FF:000055">
    <property type="entry name" value="BTB/POZ domain-containing protein 7"/>
    <property type="match status" value="1"/>
</dbReference>
<dbReference type="FunFam" id="3.30.710.10:FF:000056">
    <property type="entry name" value="BTB/POZ domain-containing protein 7"/>
    <property type="match status" value="1"/>
</dbReference>
<dbReference type="Gene3D" id="1.25.40.420">
    <property type="match status" value="1"/>
</dbReference>
<dbReference type="Gene3D" id="3.30.710.10">
    <property type="entry name" value="Potassium Channel Kv1.1, Chain A"/>
    <property type="match status" value="2"/>
</dbReference>
<dbReference type="InterPro" id="IPR011705">
    <property type="entry name" value="BACK"/>
</dbReference>
<dbReference type="InterPro" id="IPR000210">
    <property type="entry name" value="BTB/POZ_dom"/>
</dbReference>
<dbReference type="InterPro" id="IPR042345">
    <property type="entry name" value="Btbd7"/>
</dbReference>
<dbReference type="InterPro" id="IPR047936">
    <property type="entry name" value="BTBD7_BACK"/>
</dbReference>
<dbReference type="InterPro" id="IPR047934">
    <property type="entry name" value="BTBD7_BTB_POZ_first"/>
</dbReference>
<dbReference type="InterPro" id="IPR047935">
    <property type="entry name" value="BTBD7_BTB_POZ_second"/>
</dbReference>
<dbReference type="InterPro" id="IPR011333">
    <property type="entry name" value="SKP1/BTB/POZ_sf"/>
</dbReference>
<dbReference type="PANTHER" id="PTHR16064">
    <property type="entry name" value="BTB POZ DOMAIN CONTAINING 7"/>
    <property type="match status" value="1"/>
</dbReference>
<dbReference type="PANTHER" id="PTHR16064:SF5">
    <property type="entry name" value="BTB_POZ DOMAIN-CONTAINING PROTEIN 7"/>
    <property type="match status" value="1"/>
</dbReference>
<dbReference type="Pfam" id="PF07707">
    <property type="entry name" value="BACK"/>
    <property type="match status" value="1"/>
</dbReference>
<dbReference type="Pfam" id="PF00651">
    <property type="entry name" value="BTB"/>
    <property type="match status" value="2"/>
</dbReference>
<dbReference type="SMART" id="SM00875">
    <property type="entry name" value="BACK"/>
    <property type="match status" value="1"/>
</dbReference>
<dbReference type="SMART" id="SM00225">
    <property type="entry name" value="BTB"/>
    <property type="match status" value="2"/>
</dbReference>
<dbReference type="SUPFAM" id="SSF54695">
    <property type="entry name" value="POZ domain"/>
    <property type="match status" value="2"/>
</dbReference>
<dbReference type="PROSITE" id="PS50097">
    <property type="entry name" value="BTB"/>
    <property type="match status" value="2"/>
</dbReference>